<protein>
    <recommendedName>
        <fullName evidence="1">L-rhamnose isomerase</fullName>
        <ecNumber evidence="1">5.3.1.14</ecNumber>
    </recommendedName>
</protein>
<evidence type="ECO:0000255" key="1">
    <source>
        <dbReference type="HAMAP-Rule" id="MF_00541"/>
    </source>
</evidence>
<keyword id="KW-0963">Cytoplasm</keyword>
<keyword id="KW-0413">Isomerase</keyword>
<keyword id="KW-0464">Manganese</keyword>
<keyword id="KW-0479">Metal-binding</keyword>
<keyword id="KW-0684">Rhamnose metabolism</keyword>
<feature type="chain" id="PRO_1000128889" description="L-rhamnose isomerase">
    <location>
        <begin position="1"/>
        <end position="419"/>
    </location>
</feature>
<feature type="binding site" evidence="1">
    <location>
        <position position="262"/>
    </location>
    <ligand>
        <name>Mn(2+)</name>
        <dbReference type="ChEBI" id="CHEBI:29035"/>
    </ligand>
</feature>
<feature type="binding site" evidence="1">
    <location>
        <position position="294"/>
    </location>
    <ligand>
        <name>Mn(2+)</name>
        <dbReference type="ChEBI" id="CHEBI:29035"/>
    </ligand>
</feature>
<feature type="binding site" evidence="1">
    <location>
        <position position="296"/>
    </location>
    <ligand>
        <name>Mn(2+)</name>
        <dbReference type="ChEBI" id="CHEBI:29035"/>
    </ligand>
</feature>
<organism>
    <name type="scientific">Salmonella gallinarum (strain 287/91 / NCTC 13346)</name>
    <dbReference type="NCBI Taxonomy" id="550538"/>
    <lineage>
        <taxon>Bacteria</taxon>
        <taxon>Pseudomonadati</taxon>
        <taxon>Pseudomonadota</taxon>
        <taxon>Gammaproteobacteria</taxon>
        <taxon>Enterobacterales</taxon>
        <taxon>Enterobacteriaceae</taxon>
        <taxon>Salmonella</taxon>
    </lineage>
</organism>
<reference key="1">
    <citation type="journal article" date="2008" name="Genome Res.">
        <title>Comparative genome analysis of Salmonella enteritidis PT4 and Salmonella gallinarum 287/91 provides insights into evolutionary and host adaptation pathways.</title>
        <authorList>
            <person name="Thomson N.R."/>
            <person name="Clayton D.J."/>
            <person name="Windhorst D."/>
            <person name="Vernikos G."/>
            <person name="Davidson S."/>
            <person name="Churcher C."/>
            <person name="Quail M.A."/>
            <person name="Stevens M."/>
            <person name="Jones M.A."/>
            <person name="Watson M."/>
            <person name="Barron A."/>
            <person name="Layton A."/>
            <person name="Pickard D."/>
            <person name="Kingsley R.A."/>
            <person name="Bignell A."/>
            <person name="Clark L."/>
            <person name="Harris B."/>
            <person name="Ormond D."/>
            <person name="Abdellah Z."/>
            <person name="Brooks K."/>
            <person name="Cherevach I."/>
            <person name="Chillingworth T."/>
            <person name="Woodward J."/>
            <person name="Norberczak H."/>
            <person name="Lord A."/>
            <person name="Arrowsmith C."/>
            <person name="Jagels K."/>
            <person name="Moule S."/>
            <person name="Mungall K."/>
            <person name="Saunders M."/>
            <person name="Whitehead S."/>
            <person name="Chabalgoity J.A."/>
            <person name="Maskell D."/>
            <person name="Humphreys T."/>
            <person name="Roberts M."/>
            <person name="Barrow P.A."/>
            <person name="Dougan G."/>
            <person name="Parkhill J."/>
        </authorList>
    </citation>
    <scope>NUCLEOTIDE SEQUENCE [LARGE SCALE GENOMIC DNA]</scope>
    <source>
        <strain>287/91 / NCTC 13346</strain>
    </source>
</reference>
<name>RHAA_SALG2</name>
<proteinExistence type="inferred from homology"/>
<comment type="function">
    <text evidence="1">Catalyzes the interconversion of L-rhamnose and L-rhamnulose.</text>
</comment>
<comment type="catalytic activity">
    <reaction evidence="1">
        <text>L-rhamnopyranose = L-rhamnulose</text>
        <dbReference type="Rhea" id="RHEA:23160"/>
        <dbReference type="ChEBI" id="CHEBI:17897"/>
        <dbReference type="ChEBI" id="CHEBI:62346"/>
        <dbReference type="EC" id="5.3.1.14"/>
    </reaction>
</comment>
<comment type="cofactor">
    <cofactor evidence="1">
        <name>Mn(2+)</name>
        <dbReference type="ChEBI" id="CHEBI:29035"/>
    </cofactor>
    <text evidence="1">Binds 1 Mn(2+) ion per subunit.</text>
</comment>
<comment type="pathway">
    <text evidence="1">Carbohydrate degradation; L-rhamnose degradation; glycerone phosphate from L-rhamnose: step 1/3.</text>
</comment>
<comment type="subunit">
    <text evidence="1">Homotetramer.</text>
</comment>
<comment type="subcellular location">
    <subcellularLocation>
        <location evidence="1">Cytoplasm</location>
    </subcellularLocation>
</comment>
<comment type="similarity">
    <text evidence="1">Belongs to the rhamnose isomerase family.</text>
</comment>
<gene>
    <name evidence="1" type="primary">rhaA</name>
    <name type="ordered locus">SG3375</name>
</gene>
<dbReference type="EC" id="5.3.1.14" evidence="1"/>
<dbReference type="EMBL" id="AM933173">
    <property type="protein sequence ID" value="CAR39168.1"/>
    <property type="molecule type" value="Genomic_DNA"/>
</dbReference>
<dbReference type="RefSeq" id="WP_000211482.1">
    <property type="nucleotide sequence ID" value="NC_011274.1"/>
</dbReference>
<dbReference type="SMR" id="B5RFC5"/>
<dbReference type="KEGG" id="seg:SG3375"/>
<dbReference type="HOGENOM" id="CLU_052790_0_0_6"/>
<dbReference type="UniPathway" id="UPA00541">
    <property type="reaction ID" value="UER00601"/>
</dbReference>
<dbReference type="Proteomes" id="UP000008321">
    <property type="component" value="Chromosome"/>
</dbReference>
<dbReference type="GO" id="GO:0005737">
    <property type="term" value="C:cytoplasm"/>
    <property type="evidence" value="ECO:0007669"/>
    <property type="project" value="UniProtKB-SubCell"/>
</dbReference>
<dbReference type="GO" id="GO:0008740">
    <property type="term" value="F:L-rhamnose isomerase activity"/>
    <property type="evidence" value="ECO:0007669"/>
    <property type="project" value="UniProtKB-UniRule"/>
</dbReference>
<dbReference type="GO" id="GO:0030145">
    <property type="term" value="F:manganese ion binding"/>
    <property type="evidence" value="ECO:0007669"/>
    <property type="project" value="UniProtKB-UniRule"/>
</dbReference>
<dbReference type="GO" id="GO:0019324">
    <property type="term" value="P:L-lyxose metabolic process"/>
    <property type="evidence" value="ECO:0007669"/>
    <property type="project" value="TreeGrafter"/>
</dbReference>
<dbReference type="GO" id="GO:0019301">
    <property type="term" value="P:rhamnose catabolic process"/>
    <property type="evidence" value="ECO:0007669"/>
    <property type="project" value="UniProtKB-UniRule"/>
</dbReference>
<dbReference type="FunFam" id="3.20.20.150:FF:000006">
    <property type="entry name" value="L-rhamnose isomerase"/>
    <property type="match status" value="1"/>
</dbReference>
<dbReference type="Gene3D" id="3.20.20.150">
    <property type="entry name" value="Divalent-metal-dependent TIM barrel enzymes"/>
    <property type="match status" value="1"/>
</dbReference>
<dbReference type="HAMAP" id="MF_00541">
    <property type="entry name" value="RhaA"/>
    <property type="match status" value="1"/>
</dbReference>
<dbReference type="InterPro" id="IPR050337">
    <property type="entry name" value="L-rhamnose_isomerase"/>
</dbReference>
<dbReference type="InterPro" id="IPR009308">
    <property type="entry name" value="Rhamnose_isomerase"/>
</dbReference>
<dbReference type="InterPro" id="IPR036237">
    <property type="entry name" value="Xyl_isomerase-like_sf"/>
</dbReference>
<dbReference type="NCBIfam" id="NF002203">
    <property type="entry name" value="PRK01076.1"/>
    <property type="match status" value="1"/>
</dbReference>
<dbReference type="NCBIfam" id="TIGR01748">
    <property type="entry name" value="rhaA"/>
    <property type="match status" value="1"/>
</dbReference>
<dbReference type="PANTHER" id="PTHR30268">
    <property type="entry name" value="L-RHAMNOSE ISOMERASE"/>
    <property type="match status" value="1"/>
</dbReference>
<dbReference type="PANTHER" id="PTHR30268:SF0">
    <property type="entry name" value="L-RHAMNOSE ISOMERASE"/>
    <property type="match status" value="1"/>
</dbReference>
<dbReference type="Pfam" id="PF06134">
    <property type="entry name" value="RhaA"/>
    <property type="match status" value="1"/>
</dbReference>
<dbReference type="SUPFAM" id="SSF51658">
    <property type="entry name" value="Xylose isomerase-like"/>
    <property type="match status" value="1"/>
</dbReference>
<accession>B5RFC5</accession>
<sequence>MTTQLEQAWELAKQRFAAVGIDVEEALRQLDRLPVSMHCWQGDDVAGFENREGSLTGGIQSTGNYPGKARNATELRADLEQALRLIPGPKRLNLHAIYLESDTPVARDQIKPEHFKNWVEWAKANRLGLDFNPTCFSHPLSADGFTLSHPDAKIRQFWIDHCKASRRVSAYFGEQLGTPSVMNIWIPDGMKDITVDRLAPRQRLLEALDEVISEKFDPAHHIDAVESKLFGIGAESYTVGSNEFYMGYATSRQTALCLDAGHFHPTEVISDKISAAMLYVPRLLLHVSRPVRWDSDHVVLLDDETQAIASEIVRHNLFDRVHIGLDFFDASINRVAAWVIGTRNMKKALLRALLEPTDQLRQLEASGDYTVRLALLEEQKSLPWQAVWEMYCQRHDTPTGSQWLDSVRTYEKEILSKRS</sequence>